<sequence length="495" mass="60571">MGSKRRNLSCSERHQKLVDENYCKKLHVQALKNVNSQIRNQMVQNENDNRVQRKQFLRLLQNEQFELDMEEAIQKAEENKRLKELQLKQEEKLAMELAKLKHESLKDEKMRQQVRENSIELRELEKKLKAAYMNKERAAQIAEKDAIKYEQMKRDAEIAKTMMEEHKRIIKEENAAEDKRNKAKAQYYLDLEKQLEEQEKKKQEAYEQLLKEKLMIDEIVRKIYEEDQLEKQQKLEKMNAMRRYIEEFQKEQALWRKKKREEMEEENRKIIEFANMQQQREEDRMAKVQENEEKRLQLQNALTQKLEEMLRQREDLEQVRQELYQEEQAEIYKSKLKEEAEKKLRKQKEMKQDFEEQMALKELVLQAAKEEEENFRKTMLAKFAEDDRIELMNAQKQRMKQLEHRRAVEKLIEERRQQFLADKQRELEEWQLQQRRQGFINAIIEEERLKLLKEHATNLLGYLPKGVFKKEDDIDLLGEEFRKVYQQRSEICEEK</sequence>
<keyword id="KW-0002">3D-structure</keyword>
<keyword id="KW-0966">Cell projection</keyword>
<keyword id="KW-0969">Cilium</keyword>
<keyword id="KW-0175">Coiled coil</keyword>
<keyword id="KW-0963">Cytoplasm</keyword>
<keyword id="KW-0206">Cytoskeleton</keyword>
<keyword id="KW-0225">Disease variant</keyword>
<keyword id="KW-0282">Flagellum</keyword>
<keyword id="KW-1056">Heterotaxy</keyword>
<keyword id="KW-0469">Meiosis</keyword>
<keyword id="KW-0539">Nucleus</keyword>
<keyword id="KW-0597">Phosphoprotein</keyword>
<keyword id="KW-1267">Proteomics identification</keyword>
<keyword id="KW-1185">Reference proteome</keyword>
<protein>
    <recommendedName>
        <fullName evidence="8">Meiosis-specific nuclear structural protein 1</fullName>
    </recommendedName>
</protein>
<feature type="chain" id="PRO_0000298921" description="Meiosis-specific nuclear structural protein 1">
    <location>
        <begin position="1"/>
        <end position="495"/>
    </location>
</feature>
<feature type="region of interest" description="Interaction with BBOF1" evidence="2">
    <location>
        <begin position="1"/>
        <end position="314"/>
    </location>
</feature>
<feature type="coiled-coil region" evidence="3">
    <location>
        <begin position="28"/>
        <end position="410"/>
    </location>
</feature>
<feature type="modified residue" description="Phosphotyrosine" evidence="2">
    <location>
        <position position="188"/>
    </location>
</feature>
<feature type="sequence variant" id="VAR_034737" description="In dbSNP:rs34807682.">
    <original>C</original>
    <variation>Y</variation>
    <location>
        <position position="10"/>
    </location>
</feature>
<feature type="sequence variant" id="VAR_034738" description="In dbSNP:rs1715919.">
    <original>Q</original>
    <variation>P</variation>
    <location>
        <position position="55"/>
    </location>
</feature>
<feature type="sequence variant" id="VAR_034739" description="In dbSNP:rs35775595.">
    <original>I</original>
    <variation>T</variation>
    <location>
        <position position="216"/>
    </location>
</feature>
<feature type="sequence variant" id="VAR_084460" description="In HTX9; the mutant protein is undetectable in respiratory cilia from an affected patient." evidence="5">
    <location>
        <begin position="242"/>
        <end position="495"/>
    </location>
</feature>
<feature type="sequence variant" id="VAR_034740" description="In dbSNP:rs17852882." evidence="4">
    <original>Y</original>
    <variation>H</variation>
    <location>
        <position position="244"/>
    </location>
</feature>
<feature type="sequence variant" id="VAR_034741" description="In dbSNP:rs17853357." evidence="4">
    <original>E</original>
    <variation>G</variation>
    <location>
        <position position="426"/>
    </location>
</feature>
<proteinExistence type="evidence at protein level"/>
<gene>
    <name evidence="9" type="primary">MNS1</name>
</gene>
<evidence type="ECO:0000250" key="1">
    <source>
        <dbReference type="UniProtKB" id="Q2KIQ2"/>
    </source>
</evidence>
<evidence type="ECO:0000250" key="2">
    <source>
        <dbReference type="UniProtKB" id="Q61884"/>
    </source>
</evidence>
<evidence type="ECO:0000255" key="3"/>
<evidence type="ECO:0000269" key="4">
    <source>
    </source>
</evidence>
<evidence type="ECO:0000269" key="5">
    <source>
    </source>
</evidence>
<evidence type="ECO:0000269" key="6">
    <source>
    </source>
</evidence>
<evidence type="ECO:0000269" key="7">
    <source>
    </source>
</evidence>
<evidence type="ECO:0000305" key="8"/>
<evidence type="ECO:0000312" key="9">
    <source>
        <dbReference type="HGNC" id="HGNC:29636"/>
    </source>
</evidence>
<evidence type="ECO:0007744" key="10">
    <source>
        <dbReference type="PDB" id="7UNG"/>
    </source>
</evidence>
<dbReference type="EMBL" id="AK002084">
    <property type="protein sequence ID" value="BAA92077.1"/>
    <property type="molecule type" value="mRNA"/>
</dbReference>
<dbReference type="EMBL" id="BC031046">
    <property type="protein sequence ID" value="AAH31046.1"/>
    <property type="molecule type" value="mRNA"/>
</dbReference>
<dbReference type="EMBL" id="BC034991">
    <property type="protein sequence ID" value="AAH34991.1"/>
    <property type="molecule type" value="mRNA"/>
</dbReference>
<dbReference type="CCDS" id="CCDS10158.1"/>
<dbReference type="RefSeq" id="NP_060835.1">
    <property type="nucleotide sequence ID" value="NM_018365.4"/>
</dbReference>
<dbReference type="PDB" id="7UNG">
    <property type="method" value="EM"/>
    <property type="resolution" value="3.60 A"/>
    <property type="chains" value="B/C=1-495"/>
</dbReference>
<dbReference type="PDB" id="8J07">
    <property type="method" value="EM"/>
    <property type="resolution" value="4.10 A"/>
    <property type="chains" value="3W/3X/3Y=1-495"/>
</dbReference>
<dbReference type="PDBsum" id="7UNG"/>
<dbReference type="PDBsum" id="8J07"/>
<dbReference type="EMDB" id="EMD-26624"/>
<dbReference type="EMDB" id="EMD-35888"/>
<dbReference type="SMR" id="Q8NEH6"/>
<dbReference type="BioGRID" id="120610">
    <property type="interactions" value="64"/>
</dbReference>
<dbReference type="FunCoup" id="Q8NEH6">
    <property type="interactions" value="107"/>
</dbReference>
<dbReference type="IntAct" id="Q8NEH6">
    <property type="interactions" value="39"/>
</dbReference>
<dbReference type="MINT" id="Q8NEH6"/>
<dbReference type="STRING" id="9606.ENSP00000260453"/>
<dbReference type="iPTMnet" id="Q8NEH6"/>
<dbReference type="PhosphoSitePlus" id="Q8NEH6"/>
<dbReference type="BioMuta" id="MNS1"/>
<dbReference type="DMDM" id="156632590"/>
<dbReference type="jPOST" id="Q8NEH6"/>
<dbReference type="MassIVE" id="Q8NEH6"/>
<dbReference type="PaxDb" id="9606-ENSP00000260453"/>
<dbReference type="PeptideAtlas" id="Q8NEH6"/>
<dbReference type="ProteomicsDB" id="73166"/>
<dbReference type="Pumba" id="Q8NEH6"/>
<dbReference type="Antibodypedia" id="42705">
    <property type="antibodies" value="118 antibodies from 17 providers"/>
</dbReference>
<dbReference type="DNASU" id="55329"/>
<dbReference type="Ensembl" id="ENST00000260453.4">
    <property type="protein sequence ID" value="ENSP00000260453.3"/>
    <property type="gene ID" value="ENSG00000138587.6"/>
</dbReference>
<dbReference type="GeneID" id="55329"/>
<dbReference type="KEGG" id="hsa:55329"/>
<dbReference type="MANE-Select" id="ENST00000260453.4">
    <property type="protein sequence ID" value="ENSP00000260453.3"/>
    <property type="RefSeq nucleotide sequence ID" value="NM_018365.4"/>
    <property type="RefSeq protein sequence ID" value="NP_060835.1"/>
</dbReference>
<dbReference type="UCSC" id="uc002adr.2">
    <property type="organism name" value="human"/>
</dbReference>
<dbReference type="AGR" id="HGNC:29636"/>
<dbReference type="CTD" id="55329"/>
<dbReference type="DisGeNET" id="55329"/>
<dbReference type="GeneCards" id="MNS1"/>
<dbReference type="HGNC" id="HGNC:29636">
    <property type="gene designation" value="MNS1"/>
</dbReference>
<dbReference type="HPA" id="ENSG00000138587">
    <property type="expression patterns" value="Tissue enhanced (choroid plexus, fallopian tube, testis)"/>
</dbReference>
<dbReference type="MalaCards" id="MNS1"/>
<dbReference type="MIM" id="610766">
    <property type="type" value="gene"/>
</dbReference>
<dbReference type="MIM" id="618948">
    <property type="type" value="phenotype"/>
</dbReference>
<dbReference type="neXtProt" id="NX_Q8NEH6"/>
<dbReference type="OpenTargets" id="ENSG00000138587"/>
<dbReference type="PharmGKB" id="PA142671346"/>
<dbReference type="VEuPathDB" id="HostDB:ENSG00000138587"/>
<dbReference type="eggNOG" id="ENOG502QS9D">
    <property type="taxonomic scope" value="Eukaryota"/>
</dbReference>
<dbReference type="GeneTree" id="ENSGT00730000111210"/>
<dbReference type="HOGENOM" id="CLU_034848_0_0_1"/>
<dbReference type="InParanoid" id="Q8NEH6"/>
<dbReference type="OMA" id="QIRNQMV"/>
<dbReference type="OrthoDB" id="197839at2759"/>
<dbReference type="PAN-GO" id="Q8NEH6">
    <property type="GO annotations" value="2 GO annotations based on evolutionary models"/>
</dbReference>
<dbReference type="PhylomeDB" id="Q8NEH6"/>
<dbReference type="TreeFam" id="TF329219"/>
<dbReference type="PathwayCommons" id="Q8NEH6"/>
<dbReference type="SignaLink" id="Q8NEH6"/>
<dbReference type="BioGRID-ORCS" id="55329">
    <property type="hits" value="9 hits in 1153 CRISPR screens"/>
</dbReference>
<dbReference type="ChiTaRS" id="MNS1">
    <property type="organism name" value="human"/>
</dbReference>
<dbReference type="GenomeRNAi" id="55329"/>
<dbReference type="Pharos" id="Q8NEH6">
    <property type="development level" value="Tbio"/>
</dbReference>
<dbReference type="PRO" id="PR:Q8NEH6"/>
<dbReference type="Proteomes" id="UP000005640">
    <property type="component" value="Chromosome 15"/>
</dbReference>
<dbReference type="RNAct" id="Q8NEH6">
    <property type="molecule type" value="protein"/>
</dbReference>
<dbReference type="Bgee" id="ENSG00000138587">
    <property type="expression patterns" value="Expressed in bronchial epithelial cell and 146 other cell types or tissues"/>
</dbReference>
<dbReference type="GO" id="GO:0160111">
    <property type="term" value="C:axonemal A tubule inner sheath"/>
    <property type="evidence" value="ECO:0000250"/>
    <property type="project" value="UniProtKB"/>
</dbReference>
<dbReference type="GO" id="GO:0005879">
    <property type="term" value="C:axonemal microtubule"/>
    <property type="evidence" value="ECO:0000314"/>
    <property type="project" value="UniProtKB"/>
</dbReference>
<dbReference type="GO" id="GO:0005930">
    <property type="term" value="C:axoneme"/>
    <property type="evidence" value="ECO:0000314"/>
    <property type="project" value="UniProtKB"/>
</dbReference>
<dbReference type="GO" id="GO:0036064">
    <property type="term" value="C:ciliary basal body"/>
    <property type="evidence" value="ECO:0000314"/>
    <property type="project" value="HPA"/>
</dbReference>
<dbReference type="GO" id="GO:0005929">
    <property type="term" value="C:cilium"/>
    <property type="evidence" value="ECO:0000314"/>
    <property type="project" value="HPA"/>
</dbReference>
<dbReference type="GO" id="GO:0005829">
    <property type="term" value="C:cytosol"/>
    <property type="evidence" value="ECO:0000314"/>
    <property type="project" value="HPA"/>
</dbReference>
<dbReference type="GO" id="GO:0005882">
    <property type="term" value="C:intermediate filament"/>
    <property type="evidence" value="ECO:0007669"/>
    <property type="project" value="Ensembl"/>
</dbReference>
<dbReference type="GO" id="GO:0031514">
    <property type="term" value="C:motile cilium"/>
    <property type="evidence" value="ECO:0000318"/>
    <property type="project" value="GO_Central"/>
</dbReference>
<dbReference type="GO" id="GO:0005635">
    <property type="term" value="C:nuclear envelope"/>
    <property type="evidence" value="ECO:0007669"/>
    <property type="project" value="Ensembl"/>
</dbReference>
<dbReference type="GO" id="GO:0016607">
    <property type="term" value="C:nuclear speck"/>
    <property type="evidence" value="ECO:0000314"/>
    <property type="project" value="HPA"/>
</dbReference>
<dbReference type="GO" id="GO:0005654">
    <property type="term" value="C:nucleoplasm"/>
    <property type="evidence" value="ECO:0000314"/>
    <property type="project" value="HPA"/>
</dbReference>
<dbReference type="GO" id="GO:0036126">
    <property type="term" value="C:sperm flagellum"/>
    <property type="evidence" value="ECO:0000250"/>
    <property type="project" value="UniProtKB"/>
</dbReference>
<dbReference type="GO" id="GO:0042802">
    <property type="term" value="F:identical protein binding"/>
    <property type="evidence" value="ECO:0000314"/>
    <property type="project" value="MGI"/>
</dbReference>
<dbReference type="GO" id="GO:0044782">
    <property type="term" value="P:cilium organization"/>
    <property type="evidence" value="ECO:0000318"/>
    <property type="project" value="GO_Central"/>
</dbReference>
<dbReference type="GO" id="GO:0030317">
    <property type="term" value="P:flagellated sperm motility"/>
    <property type="evidence" value="ECO:0000250"/>
    <property type="project" value="UniProtKB"/>
</dbReference>
<dbReference type="GO" id="GO:0070986">
    <property type="term" value="P:left/right axis specification"/>
    <property type="evidence" value="ECO:0007669"/>
    <property type="project" value="Ensembl"/>
</dbReference>
<dbReference type="GO" id="GO:0051321">
    <property type="term" value="P:meiotic cell cycle"/>
    <property type="evidence" value="ECO:0007669"/>
    <property type="project" value="UniProtKB-KW"/>
</dbReference>
<dbReference type="GO" id="GO:0045724">
    <property type="term" value="P:positive regulation of cilium assembly"/>
    <property type="evidence" value="ECO:0007669"/>
    <property type="project" value="Ensembl"/>
</dbReference>
<dbReference type="GO" id="GO:0007288">
    <property type="term" value="P:sperm axoneme assembly"/>
    <property type="evidence" value="ECO:0007669"/>
    <property type="project" value="Ensembl"/>
</dbReference>
<dbReference type="InterPro" id="IPR026504">
    <property type="entry name" value="MNS1"/>
</dbReference>
<dbReference type="InterPro" id="IPR043597">
    <property type="entry name" value="TPH_dom"/>
</dbReference>
<dbReference type="PANTHER" id="PTHR19265">
    <property type="entry name" value="MEIOSIS-SPECIFIC NUCLEAR STRUCTURAL PROTEIN 1"/>
    <property type="match status" value="1"/>
</dbReference>
<dbReference type="PANTHER" id="PTHR19265:SF0">
    <property type="entry name" value="MEIOSIS-SPECIFIC NUCLEAR STRUCTURAL PROTEIN 1"/>
    <property type="match status" value="1"/>
</dbReference>
<dbReference type="Pfam" id="PF13868">
    <property type="entry name" value="TPH"/>
    <property type="match status" value="1"/>
</dbReference>
<accession>Q8NEH6</accession>
<accession>Q8IYT6</accession>
<accession>Q9NUP4</accession>
<name>MNS1_HUMAN</name>
<comment type="function">
    <text evidence="2 5 7">Microtubule inner protein (MIP) part of the dynein-decorated doublet microtubules (DMTs) in cilia axoneme, which is required for motile cilia beating (PubMed:36191189). May play a role in the control of meiotic division and germ cell differentiation through regulation of pairing and recombination during meiosis. Required for sperm flagella assembly (By similarity). May play a role in the assembly and function of the outer dynein arm-docking complex (ODA-DC). ODA-DC mediates outer dynein arms (ODA) binding onto the axonemal doublet microtubules (PubMed:30148830).</text>
</comment>
<comment type="subunit">
    <text evidence="2 5">Able to form oligomers (By similarity). Microtubule inner protein component of sperm flagellar doublet microtubules (By similarity). Interacts with ODAD1 (PubMed:30148830). Interacts with BBOF1 (By similarity).</text>
</comment>
<comment type="interaction">
    <interactant intactId="EBI-743811">
        <id>Q8NEH6</id>
    </interactant>
    <interactant intactId="EBI-372428">
        <id>Q9NY61</id>
        <label>AATF</label>
    </interactant>
    <organismsDiffer>false</organismsDiffer>
    <experiments>3</experiments>
</comment>
<comment type="interaction">
    <interactant intactId="EBI-743811">
        <id>Q8NEH6</id>
    </interactant>
    <interactant intactId="EBI-375013">
        <id>P30281</id>
        <label>CCND3</label>
    </interactant>
    <organismsDiffer>false</organismsDiffer>
    <experiments>3</experiments>
</comment>
<comment type="interaction">
    <interactant intactId="EBI-743811">
        <id>Q8NEH6</id>
    </interactant>
    <interactant intactId="EBI-1181367">
        <id>Q01850</id>
        <label>CDR2</label>
    </interactant>
    <organismsDiffer>false</organismsDiffer>
    <experiments>3</experiments>
</comment>
<comment type="interaction">
    <interactant intactId="EBI-743811">
        <id>Q8NEH6</id>
    </interactant>
    <interactant intactId="EBI-11522539">
        <id>Q96MT8-3</id>
        <label>CEP63</label>
    </interactant>
    <organismsDiffer>false</organismsDiffer>
    <experiments>3</experiments>
</comment>
<comment type="interaction">
    <interactant intactId="EBI-743811">
        <id>Q8NEH6</id>
    </interactant>
    <interactant intactId="EBI-25837549">
        <id>P28329-3</id>
        <label>CHAT</label>
    </interactant>
    <organismsDiffer>false</organismsDiffer>
    <experiments>3</experiments>
</comment>
<comment type="interaction">
    <interactant intactId="EBI-743811">
        <id>Q8NEH6</id>
    </interactant>
    <interactant intactId="EBI-11988027">
        <id>Q9NRI5-2</id>
        <label>DISC1</label>
    </interactant>
    <organismsDiffer>false</organismsDiffer>
    <experiments>3</experiments>
</comment>
<comment type="interaction">
    <interactant intactId="EBI-743811">
        <id>Q8NEH6</id>
    </interactant>
    <interactant intactId="EBI-12089140">
        <id>A0A0A0MR80</id>
        <label>EP400</label>
    </interactant>
    <organismsDiffer>false</organismsDiffer>
    <experiments>3</experiments>
</comment>
<comment type="interaction">
    <interactant intactId="EBI-743811">
        <id>Q8NEH6</id>
    </interactant>
    <interactant intactId="EBI-11958845">
        <id>O94868-3</id>
        <label>FCHSD2</label>
    </interactant>
    <organismsDiffer>false</organismsDiffer>
    <experiments>3</experiments>
</comment>
<comment type="interaction">
    <interactant intactId="EBI-743811">
        <id>Q8NEH6</id>
    </interactant>
    <interactant intactId="EBI-947774">
        <id>O75420</id>
        <label>GIGYF1</label>
    </interactant>
    <organismsDiffer>false</organismsDiffer>
    <experiments>3</experiments>
</comment>
<comment type="interaction">
    <interactant intactId="EBI-743811">
        <id>Q8NEH6</id>
    </interactant>
    <interactant intactId="EBI-350145">
        <id>P01112</id>
        <label>HRAS</label>
    </interactant>
    <organismsDiffer>false</organismsDiffer>
    <experiments>3</experiments>
</comment>
<comment type="interaction">
    <interactant intactId="EBI-743811">
        <id>Q8NEH6</id>
    </interactant>
    <interactant intactId="EBI-11944935">
        <id>Q15051-2</id>
        <label>IQCB1</label>
    </interactant>
    <organismsDiffer>false</organismsDiffer>
    <experiments>3</experiments>
</comment>
<comment type="interaction">
    <interactant intactId="EBI-743811">
        <id>Q8NEH6</id>
    </interactant>
    <interactant intactId="EBI-2556193">
        <id>Q63ZY3</id>
        <label>KANK2</label>
    </interactant>
    <organismsDiffer>false</organismsDiffer>
    <experiments>3</experiments>
</comment>
<comment type="interaction">
    <interactant intactId="EBI-743811">
        <id>Q8NEH6</id>
    </interactant>
    <interactant intactId="EBI-2805604">
        <id>Q2KHM9</id>
        <label>KIAA0753</label>
    </interactant>
    <organismsDiffer>false</organismsDiffer>
    <experiments>3</experiments>
</comment>
<comment type="interaction">
    <interactant intactId="EBI-743811">
        <id>Q8NEH6</id>
    </interactant>
    <interactant intactId="EBI-1047093">
        <id>O76011</id>
        <label>KRT34</label>
    </interactant>
    <organismsDiffer>false</organismsDiffer>
    <experiments>3</experiments>
</comment>
<comment type="interaction">
    <interactant intactId="EBI-743811">
        <id>Q8NEH6</id>
    </interactant>
    <interactant intactId="EBI-2949715">
        <id>O95678</id>
        <label>KRT75</label>
    </interactant>
    <organismsDiffer>false</organismsDiffer>
    <experiments>3</experiments>
</comment>
<comment type="interaction">
    <interactant intactId="EBI-743811">
        <id>Q8NEH6</id>
    </interactant>
    <interactant intactId="EBI-79165">
        <id>Q9NRD5</id>
        <label>PICK1</label>
    </interactant>
    <organismsDiffer>false</organismsDiffer>
    <experiments>3</experiments>
</comment>
<comment type="interaction">
    <interactant intactId="EBI-743811">
        <id>Q8NEH6</id>
    </interactant>
    <interactant intactId="EBI-748350">
        <id>Q9UHP6</id>
        <label>RSPH14</label>
    </interactant>
    <organismsDiffer>false</organismsDiffer>
    <experiments>3</experiments>
</comment>
<comment type="interaction">
    <interactant intactId="EBI-743811">
        <id>Q8NEH6</id>
    </interactant>
    <interactant intactId="EBI-8099743">
        <id>Q86XE0</id>
        <label>SNX32</label>
    </interactant>
    <organismsDiffer>false</organismsDiffer>
    <experiments>3</experiments>
</comment>
<comment type="interaction">
    <interactant intactId="EBI-743811">
        <id>Q8NEH6</id>
    </interactant>
    <interactant intactId="EBI-725557">
        <id>Q9NZ72</id>
        <label>STMN3</label>
    </interactant>
    <organismsDiffer>false</organismsDiffer>
    <experiments>3</experiments>
</comment>
<comment type="interaction">
    <interactant intactId="EBI-743811">
        <id>Q8NEH6</id>
    </interactant>
    <interactant intactId="EBI-716286">
        <id>Q6I9Y2</id>
        <label>THOC7</label>
    </interactant>
    <organismsDiffer>false</organismsDiffer>
    <experiments>3</experiments>
</comment>
<comment type="interaction">
    <interactant intactId="EBI-743811">
        <id>Q8NEH6</id>
    </interactant>
    <interactant intactId="EBI-746692">
        <id>P19237</id>
        <label>TNNI1</label>
    </interactant>
    <organismsDiffer>false</organismsDiffer>
    <experiments>3</experiments>
</comment>
<comment type="interaction">
    <interactant intactId="EBI-743811">
        <id>Q8NEH6</id>
    </interactant>
    <interactant intactId="EBI-7746394">
        <id>P48788</id>
        <label>TNNI2</label>
    </interactant>
    <organismsDiffer>false</organismsDiffer>
    <experiments>3</experiments>
</comment>
<comment type="interaction">
    <interactant intactId="EBI-743811">
        <id>Q8NEH6</id>
    </interactant>
    <interactant intactId="EBI-2130429">
        <id>Q9BYV2</id>
        <label>TRIM54</label>
    </interactant>
    <organismsDiffer>false</organismsDiffer>
    <experiments>3</experiments>
</comment>
<comment type="interaction">
    <interactant intactId="EBI-743811">
        <id>Q8NEH6</id>
    </interactant>
    <interactant intactId="EBI-9090990">
        <id>Q5W5X9-3</id>
        <label>TTC23</label>
    </interactant>
    <organismsDiffer>false</organismsDiffer>
    <experiments>3</experiments>
</comment>
<comment type="interaction">
    <interactant intactId="EBI-743811">
        <id>Q8NEH6</id>
    </interactant>
    <interactant intactId="EBI-6116822">
        <id>Q8N3L3</id>
        <label>TXLNB</label>
    </interactant>
    <organismsDiffer>false</organismsDiffer>
    <experiments>3</experiments>
</comment>
<comment type="interaction">
    <interactant intactId="EBI-743811">
        <id>Q8NEH6</id>
    </interactant>
    <interactant intactId="EBI-739895">
        <id>Q8N6Y0</id>
        <label>USHBP1</label>
    </interactant>
    <organismsDiffer>false</organismsDiffer>
    <experiments>3</experiments>
</comment>
<comment type="interaction">
    <interactant intactId="EBI-743811">
        <id>Q8NEH6</id>
    </interactant>
    <interactant intactId="EBI-10183064">
        <id>Q8N5A5-2</id>
        <label>ZGPAT</label>
    </interactant>
    <organismsDiffer>false</organismsDiffer>
    <experiments>3</experiments>
</comment>
<comment type="interaction">
    <interactant intactId="EBI-743811">
        <id>Q8NEH6</id>
    </interactant>
    <interactant intactId="EBI-12030590">
        <id>Q9H0C1</id>
        <label>ZMYND12</label>
    </interactant>
    <organismsDiffer>false</organismsDiffer>
    <experiments>3</experiments>
</comment>
<comment type="subcellular location">
    <subcellularLocation>
        <location evidence="2">Nucleus</location>
    </subcellularLocation>
    <subcellularLocation>
        <location evidence="5 7">Cytoplasm</location>
        <location evidence="5 7">Cytoskeleton</location>
        <location evidence="5 7">Cilium axoneme</location>
    </subcellularLocation>
    <subcellularLocation>
        <location evidence="5">Cytoplasm</location>
        <location evidence="5">Cytoskeleton</location>
        <location evidence="5">Flagellum axoneme</location>
    </subcellularLocation>
    <text evidence="1">Microtubule inner protein (MIP) part of the dynein-decorated doublet microtubules (DMTs) in cilia axoneme.</text>
</comment>
<comment type="tissue specificity">
    <text evidence="5 7">Expressed in nasal respiratory epithelium and in the sperm.</text>
</comment>
<comment type="disease" evidence="5 6">
    <disease id="DI-05875">
        <name>Heterotaxy, visceral, 9, autosomal, with male infertility</name>
        <acronym>HTX9</acronym>
        <description>A form of visceral heterotaxy, a complex disorder due to disruption of the normal left-right asymmetry of the thoracoabdominal organs. Visceral heterotaxy or situs ambiguus results in randomization of the placement of visceral organs, including the heart, lungs, liver, spleen, and stomach. The organs are oriented randomly with respect to the left-right axis and with respect to one another. It can be associated with a variety of congenital defects including cardiac malformations. HTX9 is an autosomal recessive form associated with male infertility, mainly due to defective sperm motility.</description>
        <dbReference type="MIM" id="618948"/>
    </disease>
    <text>The disease is caused by variants affecting the gene represented in this entry.</text>
</comment>
<comment type="similarity">
    <text evidence="8">Belongs to the MNS1 family.</text>
</comment>
<reference key="1">
    <citation type="journal article" date="2004" name="Nat. Genet.">
        <title>Complete sequencing and characterization of 21,243 full-length human cDNAs.</title>
        <authorList>
            <person name="Ota T."/>
            <person name="Suzuki Y."/>
            <person name="Nishikawa T."/>
            <person name="Otsuki T."/>
            <person name="Sugiyama T."/>
            <person name="Irie R."/>
            <person name="Wakamatsu A."/>
            <person name="Hayashi K."/>
            <person name="Sato H."/>
            <person name="Nagai K."/>
            <person name="Kimura K."/>
            <person name="Makita H."/>
            <person name="Sekine M."/>
            <person name="Obayashi M."/>
            <person name="Nishi T."/>
            <person name="Shibahara T."/>
            <person name="Tanaka T."/>
            <person name="Ishii S."/>
            <person name="Yamamoto J."/>
            <person name="Saito K."/>
            <person name="Kawai Y."/>
            <person name="Isono Y."/>
            <person name="Nakamura Y."/>
            <person name="Nagahari K."/>
            <person name="Murakami K."/>
            <person name="Yasuda T."/>
            <person name="Iwayanagi T."/>
            <person name="Wagatsuma M."/>
            <person name="Shiratori A."/>
            <person name="Sudo H."/>
            <person name="Hosoiri T."/>
            <person name="Kaku Y."/>
            <person name="Kodaira H."/>
            <person name="Kondo H."/>
            <person name="Sugawara M."/>
            <person name="Takahashi M."/>
            <person name="Kanda K."/>
            <person name="Yokoi T."/>
            <person name="Furuya T."/>
            <person name="Kikkawa E."/>
            <person name="Omura Y."/>
            <person name="Abe K."/>
            <person name="Kamihara K."/>
            <person name="Katsuta N."/>
            <person name="Sato K."/>
            <person name="Tanikawa M."/>
            <person name="Yamazaki M."/>
            <person name="Ninomiya K."/>
            <person name="Ishibashi T."/>
            <person name="Yamashita H."/>
            <person name="Murakawa K."/>
            <person name="Fujimori K."/>
            <person name="Tanai H."/>
            <person name="Kimata M."/>
            <person name="Watanabe M."/>
            <person name="Hiraoka S."/>
            <person name="Chiba Y."/>
            <person name="Ishida S."/>
            <person name="Ono Y."/>
            <person name="Takiguchi S."/>
            <person name="Watanabe S."/>
            <person name="Yosida M."/>
            <person name="Hotuta T."/>
            <person name="Kusano J."/>
            <person name="Kanehori K."/>
            <person name="Takahashi-Fujii A."/>
            <person name="Hara H."/>
            <person name="Tanase T.-O."/>
            <person name="Nomura Y."/>
            <person name="Togiya S."/>
            <person name="Komai F."/>
            <person name="Hara R."/>
            <person name="Takeuchi K."/>
            <person name="Arita M."/>
            <person name="Imose N."/>
            <person name="Musashino K."/>
            <person name="Yuuki H."/>
            <person name="Oshima A."/>
            <person name="Sasaki N."/>
            <person name="Aotsuka S."/>
            <person name="Yoshikawa Y."/>
            <person name="Matsunawa H."/>
            <person name="Ichihara T."/>
            <person name="Shiohata N."/>
            <person name="Sano S."/>
            <person name="Moriya S."/>
            <person name="Momiyama H."/>
            <person name="Satoh N."/>
            <person name="Takami S."/>
            <person name="Terashima Y."/>
            <person name="Suzuki O."/>
            <person name="Nakagawa S."/>
            <person name="Senoh A."/>
            <person name="Mizoguchi H."/>
            <person name="Goto Y."/>
            <person name="Shimizu F."/>
            <person name="Wakebe H."/>
            <person name="Hishigaki H."/>
            <person name="Watanabe T."/>
            <person name="Sugiyama A."/>
            <person name="Takemoto M."/>
            <person name="Kawakami B."/>
            <person name="Yamazaki M."/>
            <person name="Watanabe K."/>
            <person name="Kumagai A."/>
            <person name="Itakura S."/>
            <person name="Fukuzumi Y."/>
            <person name="Fujimori Y."/>
            <person name="Komiyama M."/>
            <person name="Tashiro H."/>
            <person name="Tanigami A."/>
            <person name="Fujiwara T."/>
            <person name="Ono T."/>
            <person name="Yamada K."/>
            <person name="Fujii Y."/>
            <person name="Ozaki K."/>
            <person name="Hirao M."/>
            <person name="Ohmori Y."/>
            <person name="Kawabata A."/>
            <person name="Hikiji T."/>
            <person name="Kobatake N."/>
            <person name="Inagaki H."/>
            <person name="Ikema Y."/>
            <person name="Okamoto S."/>
            <person name="Okitani R."/>
            <person name="Kawakami T."/>
            <person name="Noguchi S."/>
            <person name="Itoh T."/>
            <person name="Shigeta K."/>
            <person name="Senba T."/>
            <person name="Matsumura K."/>
            <person name="Nakajima Y."/>
            <person name="Mizuno T."/>
            <person name="Morinaga M."/>
            <person name="Sasaki M."/>
            <person name="Togashi T."/>
            <person name="Oyama M."/>
            <person name="Hata H."/>
            <person name="Watanabe M."/>
            <person name="Komatsu T."/>
            <person name="Mizushima-Sugano J."/>
            <person name="Satoh T."/>
            <person name="Shirai Y."/>
            <person name="Takahashi Y."/>
            <person name="Nakagawa K."/>
            <person name="Okumura K."/>
            <person name="Nagase T."/>
            <person name="Nomura N."/>
            <person name="Kikuchi H."/>
            <person name="Masuho Y."/>
            <person name="Yamashita R."/>
            <person name="Nakai K."/>
            <person name="Yada T."/>
            <person name="Nakamura Y."/>
            <person name="Ohara O."/>
            <person name="Isogai T."/>
            <person name="Sugano S."/>
        </authorList>
    </citation>
    <scope>NUCLEOTIDE SEQUENCE [LARGE SCALE MRNA]</scope>
    <source>
        <tissue>Placenta</tissue>
    </source>
</reference>
<reference key="2">
    <citation type="journal article" date="2004" name="Genome Res.">
        <title>The status, quality, and expansion of the NIH full-length cDNA project: the Mammalian Gene Collection (MGC).</title>
        <authorList>
            <consortium name="The MGC Project Team"/>
        </authorList>
    </citation>
    <scope>NUCLEOTIDE SEQUENCE [LARGE SCALE MRNA]</scope>
    <scope>VARIANTS HIS-244 AND GLY-426</scope>
    <source>
        <tissue>Testis</tissue>
    </source>
</reference>
<reference evidence="10" key="3">
    <citation type="journal article" date="2022" name="Proc. Natl. Acad. Sci. U.S.A.">
        <title>SPACA9 is a lumenal protein of human ciliary singlet and doublet microtubules.</title>
        <authorList>
            <person name="Gui M."/>
            <person name="Croft J.T."/>
            <person name="Zabeo D."/>
            <person name="Acharya V."/>
            <person name="Kollman J.M."/>
            <person name="Burgoyne T."/>
            <person name="Hoog J.L."/>
            <person name="Brown A."/>
        </authorList>
    </citation>
    <scope>STRUCTURE BY ELECTRON MICROSCOPY (3.60 ANGSTROMS)</scope>
    <scope>FUNCTION</scope>
    <scope>SUBCELLULAR LOCATION</scope>
    <scope>TISSUE SPECIFICITY</scope>
</reference>
<reference key="4">
    <citation type="journal article" date="2018" name="PLoS Genet.">
        <title>Homozygous loss-of-function mutations in MNS1 cause laterality defects and likely male infertility.</title>
        <authorList>
            <person name="Ta-Shma A."/>
            <person name="Hjeij R."/>
            <person name="Perles Z."/>
            <person name="Dougherty G.W."/>
            <person name="Abu Zahira I."/>
            <person name="Letteboer S.J.F."/>
            <person name="Antony D."/>
            <person name="Darwish A."/>
            <person name="Mans D.A."/>
            <person name="Spittler S."/>
            <person name="Edelbusch C."/>
            <person name="Cindric S."/>
            <person name="Noethe-Menchen T."/>
            <person name="Olbrich H."/>
            <person name="Stuhlmann F."/>
            <person name="Aprea I."/>
            <person name="Pennekamp P."/>
            <person name="Loges N.T."/>
            <person name="Breuer O."/>
            <person name="Shaag A."/>
            <person name="Rein A.J.J.T."/>
            <person name="Gulec E.Y."/>
            <person name="Gezdirici A."/>
            <person name="Abitbul R."/>
            <person name="Elias N."/>
            <person name="Amirav I."/>
            <person name="Schmidts M."/>
            <person name="Roepman R."/>
            <person name="Elpeleg O."/>
            <person name="Omran H."/>
        </authorList>
    </citation>
    <scope>FUNCTION</scope>
    <scope>TISSUE SPECIFICITY</scope>
    <scope>SUBCELLULAR LOCATION</scope>
    <scope>INTERACTION WITH ODAD1</scope>
    <scope>INVOLVEMENT IN HTX9</scope>
    <scope>VARIANT HTX9 242-ARG--LYS-495 DEL</scope>
    <scope>CHARACTERIZATION OF VARIANT HTX9 242-ARG--LYS-495 DEL</scope>
</reference>
<reference key="5">
    <citation type="journal article" date="2020" name="Eur. J. Hum. Genet.">
        <title>MNS1 variant associated with situs inversus and male infertility.</title>
        <authorList>
            <person name="Leslie J.S."/>
            <person name="Rawlins L.E."/>
            <person name="Chioza B.A."/>
            <person name="Olubodun O.R."/>
            <person name="Salter C.G."/>
            <person name="Fasham J."/>
            <person name="Jones H.F."/>
            <person name="Cross H.E."/>
            <person name="Lam S."/>
            <person name="Harlalka G.V."/>
            <person name="Muggenthaler M.M.A."/>
            <person name="Crosby A.H."/>
            <person name="Baple E.L."/>
        </authorList>
    </citation>
    <scope>INVOLVEMENT IN HTX9</scope>
</reference>
<organism>
    <name type="scientific">Homo sapiens</name>
    <name type="common">Human</name>
    <dbReference type="NCBI Taxonomy" id="9606"/>
    <lineage>
        <taxon>Eukaryota</taxon>
        <taxon>Metazoa</taxon>
        <taxon>Chordata</taxon>
        <taxon>Craniata</taxon>
        <taxon>Vertebrata</taxon>
        <taxon>Euteleostomi</taxon>
        <taxon>Mammalia</taxon>
        <taxon>Eutheria</taxon>
        <taxon>Euarchontoglires</taxon>
        <taxon>Primates</taxon>
        <taxon>Haplorrhini</taxon>
        <taxon>Catarrhini</taxon>
        <taxon>Hominidae</taxon>
        <taxon>Homo</taxon>
    </lineage>
</organism>